<reference key="1">
    <citation type="journal article" date="2008" name="ISME J.">
        <title>Comparative genomics of two ecotypes of the marine planktonic copiotroph Alteromonas macleodii suggests alternative lifestyles associated with different kinds of particulate organic matter.</title>
        <authorList>
            <person name="Ivars-Martinez E."/>
            <person name="Martin-Cuadrado A.-B."/>
            <person name="D'Auria G."/>
            <person name="Mira A."/>
            <person name="Ferriera S."/>
            <person name="Johnson J."/>
            <person name="Friedman R."/>
            <person name="Rodriguez-Valera F."/>
        </authorList>
    </citation>
    <scope>NUCLEOTIDE SEQUENCE [LARGE SCALE GENOMIC DNA]</scope>
    <source>
        <strain>DSM 17117 / CIP 110805 / LMG 28347 / Deep ecotype</strain>
    </source>
</reference>
<sequence length="633" mass="69760">MFYTEAFDVIVVGGGHAGTEAALAAARMGANTLLLTHNIETIGQMSCNPAIGGIGKGHLVKEIDALGGAMALAIDKGGIQFRTLNSSKGPAVRATRAQADRTLYKNAIRDIVENQENLTLFQQSVDDLIVENDRVCGVVTQMGLKFKAKSVVLTVGTFLGGTIHIGLENYRGGRAGDPPSIALADRLRALPFRVDRLKTGTPARLDARSLDFSVMQPQPGDSPTPVFSFMGDRAMHPTQIPCYITHTNEKTHDIIRGGLDRSPMFTGVIEGIGPRYCPSIEDKITRFADKTSHQIFVEPEGLNSIEVYPNGISTSLPFDVQMNLVRSIKGFENAHIVRPGYAIEYDFFDPRDLKQTLETKFIQGLFFAGQINGTTGYEEAGAQGLVAGANAALQVQQKDPFILRRDQAYMGVLIDDLATMGTKEPYRMFTSRAEYRLLLREDNADSRLTAMGREIGLVDDARWAKYNDKMEAVETELQRLRGQWIHPDHAATPQLNTMLKNPVSREHSLEELIRRPEMTYSQLMKIESVGPGIDDPIAAEQVEIQIKYAGYIARQMDEIAKTQRHENTLLPIDMDFSKISGLSNEVVAKLTEARPETIGKASRISGITPAAISLLLVYLKKHGMLRKQDKISA</sequence>
<protein>
    <recommendedName>
        <fullName evidence="1">tRNA uridine 5-carboxymethylaminomethyl modification enzyme MnmG</fullName>
    </recommendedName>
    <alternativeName>
        <fullName evidence="1">Glucose-inhibited division protein A</fullName>
    </alternativeName>
</protein>
<keyword id="KW-0963">Cytoplasm</keyword>
<keyword id="KW-0274">FAD</keyword>
<keyword id="KW-0285">Flavoprotein</keyword>
<keyword id="KW-0520">NAD</keyword>
<keyword id="KW-0819">tRNA processing</keyword>
<dbReference type="EMBL" id="CP001103">
    <property type="protein sequence ID" value="AEB00225.1"/>
    <property type="molecule type" value="Genomic_DNA"/>
</dbReference>
<dbReference type="RefSeq" id="WP_012520228.1">
    <property type="nucleotide sequence ID" value="NC_011138.3"/>
</dbReference>
<dbReference type="SMR" id="B4RS92"/>
<dbReference type="KEGG" id="amc:MADE_1020510"/>
<dbReference type="HOGENOM" id="CLU_007831_2_2_6"/>
<dbReference type="Proteomes" id="UP000001870">
    <property type="component" value="Chromosome"/>
</dbReference>
<dbReference type="GO" id="GO:0005829">
    <property type="term" value="C:cytosol"/>
    <property type="evidence" value="ECO:0007669"/>
    <property type="project" value="TreeGrafter"/>
</dbReference>
<dbReference type="GO" id="GO:0050660">
    <property type="term" value="F:flavin adenine dinucleotide binding"/>
    <property type="evidence" value="ECO:0007669"/>
    <property type="project" value="UniProtKB-UniRule"/>
</dbReference>
<dbReference type="GO" id="GO:0030488">
    <property type="term" value="P:tRNA methylation"/>
    <property type="evidence" value="ECO:0007669"/>
    <property type="project" value="TreeGrafter"/>
</dbReference>
<dbReference type="GO" id="GO:0002098">
    <property type="term" value="P:tRNA wobble uridine modification"/>
    <property type="evidence" value="ECO:0007669"/>
    <property type="project" value="InterPro"/>
</dbReference>
<dbReference type="FunFam" id="1.10.10.1800:FF:000001">
    <property type="entry name" value="tRNA uridine 5-carboxymethylaminomethyl modification enzyme MnmG"/>
    <property type="match status" value="1"/>
</dbReference>
<dbReference type="FunFam" id="1.10.150.570:FF:000001">
    <property type="entry name" value="tRNA uridine 5-carboxymethylaminomethyl modification enzyme MnmG"/>
    <property type="match status" value="1"/>
</dbReference>
<dbReference type="FunFam" id="3.50.50.60:FF:000002">
    <property type="entry name" value="tRNA uridine 5-carboxymethylaminomethyl modification enzyme MnmG"/>
    <property type="match status" value="1"/>
</dbReference>
<dbReference type="FunFam" id="3.50.50.60:FF:000010">
    <property type="entry name" value="tRNA uridine 5-carboxymethylaminomethyl modification enzyme MnmG"/>
    <property type="match status" value="1"/>
</dbReference>
<dbReference type="Gene3D" id="3.50.50.60">
    <property type="entry name" value="FAD/NAD(P)-binding domain"/>
    <property type="match status" value="2"/>
</dbReference>
<dbReference type="Gene3D" id="1.10.150.570">
    <property type="entry name" value="GidA associated domain, C-terminal subdomain"/>
    <property type="match status" value="1"/>
</dbReference>
<dbReference type="Gene3D" id="1.10.10.1800">
    <property type="entry name" value="tRNA uridine 5-carboxymethylaminomethyl modification enzyme MnmG/GidA"/>
    <property type="match status" value="1"/>
</dbReference>
<dbReference type="HAMAP" id="MF_00129">
    <property type="entry name" value="MnmG_GidA"/>
    <property type="match status" value="1"/>
</dbReference>
<dbReference type="InterPro" id="IPR036188">
    <property type="entry name" value="FAD/NAD-bd_sf"/>
</dbReference>
<dbReference type="InterPro" id="IPR049312">
    <property type="entry name" value="GIDA_C_N"/>
</dbReference>
<dbReference type="InterPro" id="IPR004416">
    <property type="entry name" value="MnmG"/>
</dbReference>
<dbReference type="InterPro" id="IPR002218">
    <property type="entry name" value="MnmG-rel"/>
</dbReference>
<dbReference type="InterPro" id="IPR020595">
    <property type="entry name" value="MnmG-rel_CS"/>
</dbReference>
<dbReference type="InterPro" id="IPR026904">
    <property type="entry name" value="MnmG_C"/>
</dbReference>
<dbReference type="InterPro" id="IPR047001">
    <property type="entry name" value="MnmG_C_subdom"/>
</dbReference>
<dbReference type="InterPro" id="IPR044920">
    <property type="entry name" value="MnmG_C_subdom_sf"/>
</dbReference>
<dbReference type="InterPro" id="IPR040131">
    <property type="entry name" value="MnmG_N"/>
</dbReference>
<dbReference type="NCBIfam" id="TIGR00136">
    <property type="entry name" value="mnmG_gidA"/>
    <property type="match status" value="1"/>
</dbReference>
<dbReference type="PANTHER" id="PTHR11806">
    <property type="entry name" value="GLUCOSE INHIBITED DIVISION PROTEIN A"/>
    <property type="match status" value="1"/>
</dbReference>
<dbReference type="PANTHER" id="PTHR11806:SF0">
    <property type="entry name" value="PROTEIN MTO1 HOMOLOG, MITOCHONDRIAL"/>
    <property type="match status" value="1"/>
</dbReference>
<dbReference type="Pfam" id="PF01134">
    <property type="entry name" value="GIDA"/>
    <property type="match status" value="1"/>
</dbReference>
<dbReference type="Pfam" id="PF21680">
    <property type="entry name" value="GIDA_C_1st"/>
    <property type="match status" value="1"/>
</dbReference>
<dbReference type="Pfam" id="PF13932">
    <property type="entry name" value="SAM_GIDA_C"/>
    <property type="match status" value="1"/>
</dbReference>
<dbReference type="SMART" id="SM01228">
    <property type="entry name" value="GIDA_assoc_3"/>
    <property type="match status" value="1"/>
</dbReference>
<dbReference type="SUPFAM" id="SSF51905">
    <property type="entry name" value="FAD/NAD(P)-binding domain"/>
    <property type="match status" value="1"/>
</dbReference>
<dbReference type="PROSITE" id="PS01280">
    <property type="entry name" value="GIDA_1"/>
    <property type="match status" value="1"/>
</dbReference>
<dbReference type="PROSITE" id="PS01281">
    <property type="entry name" value="GIDA_2"/>
    <property type="match status" value="1"/>
</dbReference>
<accession>B4RS92</accession>
<accession>F2GD47</accession>
<organism>
    <name type="scientific">Alteromonas mediterranea (strain DSM 17117 / CIP 110805 / LMG 28347 / Deep ecotype)</name>
    <dbReference type="NCBI Taxonomy" id="1774373"/>
    <lineage>
        <taxon>Bacteria</taxon>
        <taxon>Pseudomonadati</taxon>
        <taxon>Pseudomonadota</taxon>
        <taxon>Gammaproteobacteria</taxon>
        <taxon>Alteromonadales</taxon>
        <taxon>Alteromonadaceae</taxon>
        <taxon>Alteromonas/Salinimonas group</taxon>
        <taxon>Alteromonas</taxon>
    </lineage>
</organism>
<proteinExistence type="inferred from homology"/>
<evidence type="ECO:0000255" key="1">
    <source>
        <dbReference type="HAMAP-Rule" id="MF_00129"/>
    </source>
</evidence>
<comment type="function">
    <text evidence="1">NAD-binding protein involved in the addition of a carboxymethylaminomethyl (cmnm) group at the wobble position (U34) of certain tRNAs, forming tRNA-cmnm(5)s(2)U34.</text>
</comment>
<comment type="cofactor">
    <cofactor evidence="1">
        <name>FAD</name>
        <dbReference type="ChEBI" id="CHEBI:57692"/>
    </cofactor>
</comment>
<comment type="subunit">
    <text evidence="1">Homodimer. Heterotetramer of two MnmE and two MnmG subunits.</text>
</comment>
<comment type="subcellular location">
    <subcellularLocation>
        <location evidence="1">Cytoplasm</location>
    </subcellularLocation>
</comment>
<comment type="similarity">
    <text evidence="1">Belongs to the MnmG family.</text>
</comment>
<gene>
    <name evidence="1" type="primary">mnmG</name>
    <name evidence="1" type="synonym">gidA</name>
    <name type="ordered locus">MADE_1020510</name>
</gene>
<name>MNMG_ALTMD</name>
<feature type="chain" id="PRO_1000095643" description="tRNA uridine 5-carboxymethylaminomethyl modification enzyme MnmG">
    <location>
        <begin position="1"/>
        <end position="633"/>
    </location>
</feature>
<feature type="binding site" evidence="1">
    <location>
        <begin position="13"/>
        <end position="18"/>
    </location>
    <ligand>
        <name>FAD</name>
        <dbReference type="ChEBI" id="CHEBI:57692"/>
    </ligand>
</feature>
<feature type="binding site" evidence="1">
    <location>
        <position position="125"/>
    </location>
    <ligand>
        <name>FAD</name>
        <dbReference type="ChEBI" id="CHEBI:57692"/>
    </ligand>
</feature>
<feature type="binding site" evidence="1">
    <location>
        <position position="180"/>
    </location>
    <ligand>
        <name>FAD</name>
        <dbReference type="ChEBI" id="CHEBI:57692"/>
    </ligand>
</feature>
<feature type="binding site" evidence="1">
    <location>
        <begin position="273"/>
        <end position="287"/>
    </location>
    <ligand>
        <name>NAD(+)</name>
        <dbReference type="ChEBI" id="CHEBI:57540"/>
    </ligand>
</feature>
<feature type="binding site" evidence="1">
    <location>
        <position position="370"/>
    </location>
    <ligand>
        <name>FAD</name>
        <dbReference type="ChEBI" id="CHEBI:57692"/>
    </ligand>
</feature>